<sequence length="249" mass="28908">MSEQKITFADQKRKTVETAEFTEDGRYKRKVRSFVLRTGRLSEFQRNMMNDNWADFGLEHQNNYFDFAEIYGNTNPVILEIGFGMGKSLVEMAEQNPERNYLGIEVHTPGVGACIAYAVEKQVKNLRVICHDATEILQDCIADDSLGGLQLFFPDPWHKSKHHKRRIVQPNFVDNVMQKLQQSGFIHMATDWENYAEQMLDVLSQSKALTNTSKTNDFIPRPDFRPLTKFEQRGHRLGHGVWDLYFVKN</sequence>
<gene>
    <name evidence="2" type="primary">trmB</name>
    <name type="ordered locus">MS0318</name>
</gene>
<feature type="chain" id="PRO_0000171346" description="tRNA (guanine-N(7)-)-methyltransferase">
    <location>
        <begin position="1"/>
        <end position="249"/>
    </location>
</feature>
<feature type="active site" evidence="1">
    <location>
        <position position="155"/>
    </location>
</feature>
<feature type="binding site" evidence="2">
    <location>
        <position position="80"/>
    </location>
    <ligand>
        <name>S-adenosyl-L-methionine</name>
        <dbReference type="ChEBI" id="CHEBI:59789"/>
    </ligand>
</feature>
<feature type="binding site" evidence="2">
    <location>
        <position position="105"/>
    </location>
    <ligand>
        <name>S-adenosyl-L-methionine</name>
        <dbReference type="ChEBI" id="CHEBI:59789"/>
    </ligand>
</feature>
<feature type="binding site" evidence="2">
    <location>
        <position position="132"/>
    </location>
    <ligand>
        <name>S-adenosyl-L-methionine</name>
        <dbReference type="ChEBI" id="CHEBI:59789"/>
    </ligand>
</feature>
<feature type="binding site" evidence="2">
    <location>
        <position position="155"/>
    </location>
    <ligand>
        <name>S-adenosyl-L-methionine</name>
        <dbReference type="ChEBI" id="CHEBI:59789"/>
    </ligand>
</feature>
<feature type="binding site" evidence="2">
    <location>
        <position position="159"/>
    </location>
    <ligand>
        <name>substrate</name>
    </ligand>
</feature>
<feature type="binding site" evidence="2">
    <location>
        <position position="191"/>
    </location>
    <ligand>
        <name>substrate</name>
    </ligand>
</feature>
<feature type="binding site" evidence="2">
    <location>
        <begin position="228"/>
        <end position="231"/>
    </location>
    <ligand>
        <name>substrate</name>
    </ligand>
</feature>
<comment type="function">
    <text evidence="2">Catalyzes the formation of N(7)-methylguanine at position 46 (m7G46) in tRNA.</text>
</comment>
<comment type="catalytic activity">
    <reaction evidence="2">
        <text>guanosine(46) in tRNA + S-adenosyl-L-methionine = N(7)-methylguanosine(46) in tRNA + S-adenosyl-L-homocysteine</text>
        <dbReference type="Rhea" id="RHEA:42708"/>
        <dbReference type="Rhea" id="RHEA-COMP:10188"/>
        <dbReference type="Rhea" id="RHEA-COMP:10189"/>
        <dbReference type="ChEBI" id="CHEBI:57856"/>
        <dbReference type="ChEBI" id="CHEBI:59789"/>
        <dbReference type="ChEBI" id="CHEBI:74269"/>
        <dbReference type="ChEBI" id="CHEBI:74480"/>
        <dbReference type="EC" id="2.1.1.33"/>
    </reaction>
</comment>
<comment type="pathway">
    <text evidence="2">tRNA modification; N(7)-methylguanine-tRNA biosynthesis.</text>
</comment>
<comment type="similarity">
    <text evidence="2">Belongs to the class I-like SAM-binding methyltransferase superfamily. TrmB family.</text>
</comment>
<comment type="sequence caution" evidence="3">
    <conflict type="erroneous initiation">
        <sequence resource="EMBL-CDS" id="AAU36925"/>
    </conflict>
</comment>
<proteinExistence type="inferred from homology"/>
<protein>
    <recommendedName>
        <fullName evidence="2">tRNA (guanine-N(7)-)-methyltransferase</fullName>
        <ecNumber evidence="2">2.1.1.33</ecNumber>
    </recommendedName>
    <alternativeName>
        <fullName evidence="2">tRNA (guanine(46)-N(7))-methyltransferase</fullName>
    </alternativeName>
    <alternativeName>
        <fullName evidence="2">tRNA(m7G46)-methyltransferase</fullName>
    </alternativeName>
</protein>
<dbReference type="EC" id="2.1.1.33" evidence="2"/>
<dbReference type="EMBL" id="AE016827">
    <property type="protein sequence ID" value="AAU36925.1"/>
    <property type="status" value="ALT_INIT"/>
    <property type="molecule type" value="Genomic_DNA"/>
</dbReference>
<dbReference type="RefSeq" id="WP_041639493.1">
    <property type="nucleotide sequence ID" value="NC_006300.1"/>
</dbReference>
<dbReference type="SMR" id="Q65VT5"/>
<dbReference type="STRING" id="221988.MS0318"/>
<dbReference type="KEGG" id="msu:MS0318"/>
<dbReference type="eggNOG" id="COG0220">
    <property type="taxonomic scope" value="Bacteria"/>
</dbReference>
<dbReference type="HOGENOM" id="CLU_050910_0_1_6"/>
<dbReference type="OrthoDB" id="9802090at2"/>
<dbReference type="UniPathway" id="UPA00989"/>
<dbReference type="Proteomes" id="UP000000607">
    <property type="component" value="Chromosome"/>
</dbReference>
<dbReference type="GO" id="GO:0043527">
    <property type="term" value="C:tRNA methyltransferase complex"/>
    <property type="evidence" value="ECO:0007669"/>
    <property type="project" value="TreeGrafter"/>
</dbReference>
<dbReference type="GO" id="GO:0008176">
    <property type="term" value="F:tRNA (guanine(46)-N7)-methyltransferase activity"/>
    <property type="evidence" value="ECO:0007669"/>
    <property type="project" value="UniProtKB-UniRule"/>
</dbReference>
<dbReference type="FunFam" id="3.40.50.150:FF:000035">
    <property type="entry name" value="tRNA (guanine-N(7)-)-methyltransferase"/>
    <property type="match status" value="1"/>
</dbReference>
<dbReference type="Gene3D" id="3.40.50.150">
    <property type="entry name" value="Vaccinia Virus protein VP39"/>
    <property type="match status" value="1"/>
</dbReference>
<dbReference type="HAMAP" id="MF_01057">
    <property type="entry name" value="tRNA_methyltr_TrmB"/>
    <property type="match status" value="1"/>
</dbReference>
<dbReference type="InterPro" id="IPR029063">
    <property type="entry name" value="SAM-dependent_MTases_sf"/>
</dbReference>
<dbReference type="InterPro" id="IPR003358">
    <property type="entry name" value="tRNA_(Gua-N-7)_MeTrfase_Trmb"/>
</dbReference>
<dbReference type="InterPro" id="IPR055361">
    <property type="entry name" value="tRNA_methyltr_TrmB_bact"/>
</dbReference>
<dbReference type="NCBIfam" id="TIGR00091">
    <property type="entry name" value="tRNA (guanosine(46)-N7)-methyltransferase TrmB"/>
    <property type="match status" value="1"/>
</dbReference>
<dbReference type="PANTHER" id="PTHR23417">
    <property type="entry name" value="3-DEOXY-D-MANNO-OCTULOSONIC-ACID TRANSFERASE/TRNA GUANINE-N 7 - -METHYLTRANSFERASE"/>
    <property type="match status" value="1"/>
</dbReference>
<dbReference type="PANTHER" id="PTHR23417:SF14">
    <property type="entry name" value="PENTACOTRIPEPTIDE-REPEAT REGION OF PRORP DOMAIN-CONTAINING PROTEIN"/>
    <property type="match status" value="1"/>
</dbReference>
<dbReference type="Pfam" id="PF02390">
    <property type="entry name" value="Methyltransf_4"/>
    <property type="match status" value="1"/>
</dbReference>
<dbReference type="SUPFAM" id="SSF53335">
    <property type="entry name" value="S-adenosyl-L-methionine-dependent methyltransferases"/>
    <property type="match status" value="1"/>
</dbReference>
<dbReference type="PROSITE" id="PS51625">
    <property type="entry name" value="SAM_MT_TRMB"/>
    <property type="match status" value="1"/>
</dbReference>
<accession>Q65VT5</accession>
<keyword id="KW-0489">Methyltransferase</keyword>
<keyword id="KW-0949">S-adenosyl-L-methionine</keyword>
<keyword id="KW-0808">Transferase</keyword>
<keyword id="KW-0819">tRNA processing</keyword>
<reference key="1">
    <citation type="journal article" date="2004" name="Nat. Biotechnol.">
        <title>The genome sequence of the capnophilic rumen bacterium Mannheimia succiniciproducens.</title>
        <authorList>
            <person name="Hong S.H."/>
            <person name="Kim J.S."/>
            <person name="Lee S.Y."/>
            <person name="In Y.H."/>
            <person name="Choi S.S."/>
            <person name="Rih J.-K."/>
            <person name="Kim C.H."/>
            <person name="Jeong H."/>
            <person name="Hur C.G."/>
            <person name="Kim J.J."/>
        </authorList>
    </citation>
    <scope>NUCLEOTIDE SEQUENCE [LARGE SCALE GENOMIC DNA]</scope>
    <source>
        <strain>KCTC 0769BP / MBEL55E</strain>
    </source>
</reference>
<name>TRMB_MANSM</name>
<evidence type="ECO:0000250" key="1"/>
<evidence type="ECO:0000255" key="2">
    <source>
        <dbReference type="HAMAP-Rule" id="MF_01057"/>
    </source>
</evidence>
<evidence type="ECO:0000305" key="3"/>
<organism>
    <name type="scientific">Mannheimia succiniciproducens (strain KCTC 0769BP / MBEL55E)</name>
    <dbReference type="NCBI Taxonomy" id="221988"/>
    <lineage>
        <taxon>Bacteria</taxon>
        <taxon>Pseudomonadati</taxon>
        <taxon>Pseudomonadota</taxon>
        <taxon>Gammaproteobacteria</taxon>
        <taxon>Pasteurellales</taxon>
        <taxon>Pasteurellaceae</taxon>
        <taxon>Basfia</taxon>
    </lineage>
</organism>